<sequence>MVKSSLQRILNSHCFAREKEGDKPSATVHATRTMPLLSLHSRGGRSSESSRVSINCCSNLGPGPRWCSDVPHPPLKIPGGRGNSQRDHNLSANLFYSDNRLNVTEELTSNNKTRIFNVQSRLTEAKHINWRAVLSNSCLYVEIPGGALPEGSKDSFAVLLEFAEEQLHVDHVFICFHKNRDDRAALLRTFSFLGFEIVRPGHPLVPKRPDACFMAYTFERESSGEEE</sequence>
<accession>Q56K12</accession>
<reference key="1">
    <citation type="submission" date="2005-01" db="EMBL/GenBank/DDBJ databases">
        <title>Analysis of sequences obtained from constructed full-length bovine cDNA libraries.</title>
        <authorList>
            <person name="Yu J."/>
            <person name="Meng Y."/>
            <person name="Wang Z."/>
            <person name="Hansen C."/>
            <person name="Li C."/>
            <person name="Moore S.S."/>
        </authorList>
    </citation>
    <scope>NUCLEOTIDE SEQUENCE [LARGE SCALE MRNA]</scope>
    <source>
        <tissue>Lymphoid epithelium</tissue>
    </source>
</reference>
<proteinExistence type="evidence at transcript level"/>
<gene>
    <name type="primary">OAZ1</name>
</gene>
<dbReference type="EMBL" id="AY911315">
    <property type="protein sequence ID" value="AAW82083.1"/>
    <property type="status" value="ALT_SEQ"/>
    <property type="molecule type" value="mRNA"/>
</dbReference>
<dbReference type="SMR" id="Q56K12"/>
<dbReference type="FunCoup" id="Q56K12">
    <property type="interactions" value="1344"/>
</dbReference>
<dbReference type="STRING" id="9913.ENSBTAP00000024656"/>
<dbReference type="PaxDb" id="9913-ENSBTAP00000024656"/>
<dbReference type="eggNOG" id="KOG4387">
    <property type="taxonomic scope" value="Eukaryota"/>
</dbReference>
<dbReference type="InParanoid" id="Q56K12"/>
<dbReference type="Proteomes" id="UP000009136">
    <property type="component" value="Unplaced"/>
</dbReference>
<dbReference type="GO" id="GO:0005737">
    <property type="term" value="C:cytoplasm"/>
    <property type="evidence" value="ECO:0000318"/>
    <property type="project" value="GO_Central"/>
</dbReference>
<dbReference type="GO" id="GO:0005634">
    <property type="term" value="C:nucleus"/>
    <property type="evidence" value="ECO:0000318"/>
    <property type="project" value="GO_Central"/>
</dbReference>
<dbReference type="GO" id="GO:0008073">
    <property type="term" value="F:ornithine decarboxylase inhibitor activity"/>
    <property type="evidence" value="ECO:0000250"/>
    <property type="project" value="UniProtKB"/>
</dbReference>
<dbReference type="GO" id="GO:0006596">
    <property type="term" value="P:polyamine biosynthetic process"/>
    <property type="evidence" value="ECO:0007669"/>
    <property type="project" value="UniProtKB-KW"/>
</dbReference>
<dbReference type="GO" id="GO:0090316">
    <property type="term" value="P:positive regulation of intracellular protein transport"/>
    <property type="evidence" value="ECO:0000250"/>
    <property type="project" value="UniProtKB"/>
</dbReference>
<dbReference type="GO" id="GO:0045732">
    <property type="term" value="P:positive regulation of protein catabolic process"/>
    <property type="evidence" value="ECO:0000250"/>
    <property type="project" value="UniProtKB"/>
</dbReference>
<dbReference type="GO" id="GO:0075523">
    <property type="term" value="P:viral translational frameshifting"/>
    <property type="evidence" value="ECO:0007669"/>
    <property type="project" value="UniProtKB-KW"/>
</dbReference>
<dbReference type="FunFam" id="3.40.630.60:FF:000001">
    <property type="entry name" value="Ornithine decarboxylase antizyme 1"/>
    <property type="match status" value="1"/>
</dbReference>
<dbReference type="Gene3D" id="3.40.630.60">
    <property type="match status" value="1"/>
</dbReference>
<dbReference type="InterPro" id="IPR016181">
    <property type="entry name" value="Acyl_CoA_acyltransferase"/>
</dbReference>
<dbReference type="InterPro" id="IPR002993">
    <property type="entry name" value="ODC_AZ"/>
</dbReference>
<dbReference type="InterPro" id="IPR038581">
    <property type="entry name" value="ODC_AZ_sf"/>
</dbReference>
<dbReference type="PANTHER" id="PTHR10279">
    <property type="entry name" value="ORNITHINE DECARBOXYLASE ANTIZYME"/>
    <property type="match status" value="1"/>
</dbReference>
<dbReference type="PANTHER" id="PTHR10279:SF8">
    <property type="entry name" value="ORNITHINE DECARBOXYLASE ANTIZYME 1"/>
    <property type="match status" value="1"/>
</dbReference>
<dbReference type="Pfam" id="PF02100">
    <property type="entry name" value="ODC_AZ"/>
    <property type="match status" value="1"/>
</dbReference>
<dbReference type="SUPFAM" id="SSF55729">
    <property type="entry name" value="Acyl-CoA N-acyltransferases (Nat)"/>
    <property type="match status" value="1"/>
</dbReference>
<dbReference type="PROSITE" id="PS01337">
    <property type="entry name" value="ODC_AZ"/>
    <property type="match status" value="1"/>
</dbReference>
<name>OAZ1_BOVIN</name>
<protein>
    <recommendedName>
        <fullName>Ornithine decarboxylase antizyme 1</fullName>
        <shortName>ODC-Az</shortName>
    </recommendedName>
</protein>
<evidence type="ECO:0000250" key="1">
    <source>
        <dbReference type="UniProtKB" id="P54368"/>
    </source>
</evidence>
<evidence type="ECO:0000256" key="2">
    <source>
        <dbReference type="SAM" id="MobiDB-lite"/>
    </source>
</evidence>
<evidence type="ECO:0000305" key="3"/>
<keyword id="KW-0620">Polyamine biosynthesis</keyword>
<keyword id="KW-1185">Reference proteome</keyword>
<keyword id="KW-0688">Ribosomal frameshifting</keyword>
<keyword id="KW-0813">Transport</keyword>
<comment type="function">
    <text evidence="1">Ornithine decarboxylase (ODC) antizyme protein that negatively regulates ODC activity and intracellular polyamine biosynthesis and uptake in response to increased intracellular polyamine levels. Binds to ODC monomers, inhibiting the assembly of the functional ODC homodimer, and targets the monomers for ubiquitin-independent proteolytic destruction by the 26S proteasome. Triggers ODC degradation by inducing the exposure of a cryptic proteasome-interacting surface of ODC. Stabilizes AZIN2 by interfering with its ubiquitination. Also inhibits cellular uptake of polyamines by inactivating the polyamine uptake transporter. SMAD1/OAZ1/PSMB4 complex mediates the degradation of the CREBBP/EP300 repressor SNIP1. Involved in the translocation of AZIN2 from ER-Golgi intermediate compartment (ERGIC) to the cytosol.</text>
</comment>
<comment type="subunit">
    <text evidence="1">Interacts with ODC1 and thereby sterically blocks ODC homodimerization. Forms a ternary complex with PSMB4 and OAZ1 before PSMB4 is incorporated into the 20S proteasome. Interacts with AZIN2; this interaction disrupts the interaction between the antizyme and ODC1. Interacts with FAM171A1 (By similarity).</text>
</comment>
<comment type="alternative products">
    <event type="ribosomal frameshifting"/>
    <isoform>
        <id>Q56K12-1</id>
        <name>1</name>
        <sequence type="displayed"/>
    </isoform>
    <text>A ribosomal frameshift occurs between the codons for Ser-68 and Asp-69. An autoregulatory mechanism enables modulation of frameshifting according to the cellular concentration of polyamines.</text>
</comment>
<comment type="similarity">
    <text evidence="3">Belongs to the ODC antizyme family.</text>
</comment>
<organism>
    <name type="scientific">Bos taurus</name>
    <name type="common">Bovine</name>
    <dbReference type="NCBI Taxonomy" id="9913"/>
    <lineage>
        <taxon>Eukaryota</taxon>
        <taxon>Metazoa</taxon>
        <taxon>Chordata</taxon>
        <taxon>Craniata</taxon>
        <taxon>Vertebrata</taxon>
        <taxon>Euteleostomi</taxon>
        <taxon>Mammalia</taxon>
        <taxon>Eutheria</taxon>
        <taxon>Laurasiatheria</taxon>
        <taxon>Artiodactyla</taxon>
        <taxon>Ruminantia</taxon>
        <taxon>Pecora</taxon>
        <taxon>Bovidae</taxon>
        <taxon>Bovinae</taxon>
        <taxon>Bos</taxon>
    </lineage>
</organism>
<feature type="chain" id="PRO_0000240342" description="Ornithine decarboxylase antizyme 1">
    <location>
        <begin position="1"/>
        <end position="227"/>
    </location>
</feature>
<feature type="region of interest" description="Disordered" evidence="2">
    <location>
        <begin position="20"/>
        <end position="50"/>
    </location>
</feature>
<feature type="compositionally biased region" description="Low complexity" evidence="2">
    <location>
        <begin position="36"/>
        <end position="50"/>
    </location>
</feature>